<sequence>MRTSQYLLSTLKETPSDAEIVSHQLMLRAGMIRKLASGMYAWLPSGLRVLKKIENIVREEMNNAGAIEVSMPVVQPAELWQESGRWDDYGPELCRLTDRHNRPFVLGPTHEEVITSLVRYEVNSYKQLPLNLYQIQTKFRDEVRPRFGVMRGREFLMKDAYSFHIDKASLIETYERMHAAYCAAFTRMGLNFRPVQADTGSIGGTGSHEFQVLAESGEDLIAFSDTSDYAANIEMAEALAPAGERPAATAALTKVATPAVHTIDEVAAFLNVAPAAIAKTLLVLGEEDEHGNQAVIALVLRGDHELNEIKAEKLAGVANPLTFANDEQIKAAAGCDAGSIGPVGFAGRIIADRSAAHLADFVCGANETGFHLTGANWDRDIASYEVADLRNVVEGDPSPCGQGKLLLKRGIEVGHIFQLGTKYSEAMKASVLNEGGKSVTMEMGCYGIGVSRLVAAAIEQNNDQYGIIWPEAIAPFEVAIVPMNMHKSERVAEQAQQFYAELKAAGVDVLFDDRKERPGVMFADMELLGVPHAIVIGDRGLDNGVVEYKCRRTGEKQEVAISEIVALLKAKLGR</sequence>
<organism>
    <name type="scientific">Aeromonas hydrophila subsp. hydrophila (strain ATCC 7966 / DSM 30187 / BCRC 13018 / CCUG 14551 / JCM 1027 / KCTC 2358 / NCIMB 9240 / NCTC 8049)</name>
    <dbReference type="NCBI Taxonomy" id="380703"/>
    <lineage>
        <taxon>Bacteria</taxon>
        <taxon>Pseudomonadati</taxon>
        <taxon>Pseudomonadota</taxon>
        <taxon>Gammaproteobacteria</taxon>
        <taxon>Aeromonadales</taxon>
        <taxon>Aeromonadaceae</taxon>
        <taxon>Aeromonas</taxon>
    </lineage>
</organism>
<reference key="1">
    <citation type="journal article" date="2006" name="J. Bacteriol.">
        <title>Genome sequence of Aeromonas hydrophila ATCC 7966T: jack of all trades.</title>
        <authorList>
            <person name="Seshadri R."/>
            <person name="Joseph S.W."/>
            <person name="Chopra A.K."/>
            <person name="Sha J."/>
            <person name="Shaw J."/>
            <person name="Graf J."/>
            <person name="Haft D.H."/>
            <person name="Wu M."/>
            <person name="Ren Q."/>
            <person name="Rosovitz M.J."/>
            <person name="Madupu R."/>
            <person name="Tallon L."/>
            <person name="Kim M."/>
            <person name="Jin S."/>
            <person name="Vuong H."/>
            <person name="Stine O.C."/>
            <person name="Ali A."/>
            <person name="Horneman A.J."/>
            <person name="Heidelberg J.F."/>
        </authorList>
    </citation>
    <scope>NUCLEOTIDE SEQUENCE [LARGE SCALE GENOMIC DNA]</scope>
    <source>
        <strain>ATCC 7966 / DSM 30187 / BCRC 13018 / CCUG 14551 / JCM 1027 / KCTC 2358 / NCIMB 9240 / NCTC 8049</strain>
    </source>
</reference>
<comment type="function">
    <text evidence="1">Catalyzes the attachment of proline to tRNA(Pro) in a two-step reaction: proline is first activated by ATP to form Pro-AMP and then transferred to the acceptor end of tRNA(Pro). As ProRS can inadvertently accommodate and process non-cognate amino acids such as alanine and cysteine, to avoid such errors it has two additional distinct editing activities against alanine. One activity is designated as 'pretransfer' editing and involves the tRNA(Pro)-independent hydrolysis of activated Ala-AMP. The other activity is designated 'posttransfer' editing and involves deacylation of mischarged Ala-tRNA(Pro). The misacylated Cys-tRNA(Pro) is not edited by ProRS.</text>
</comment>
<comment type="catalytic activity">
    <reaction evidence="1">
        <text>tRNA(Pro) + L-proline + ATP = L-prolyl-tRNA(Pro) + AMP + diphosphate</text>
        <dbReference type="Rhea" id="RHEA:14305"/>
        <dbReference type="Rhea" id="RHEA-COMP:9700"/>
        <dbReference type="Rhea" id="RHEA-COMP:9702"/>
        <dbReference type="ChEBI" id="CHEBI:30616"/>
        <dbReference type="ChEBI" id="CHEBI:33019"/>
        <dbReference type="ChEBI" id="CHEBI:60039"/>
        <dbReference type="ChEBI" id="CHEBI:78442"/>
        <dbReference type="ChEBI" id="CHEBI:78532"/>
        <dbReference type="ChEBI" id="CHEBI:456215"/>
        <dbReference type="EC" id="6.1.1.15"/>
    </reaction>
</comment>
<comment type="subunit">
    <text evidence="1">Homodimer.</text>
</comment>
<comment type="subcellular location">
    <subcellularLocation>
        <location evidence="1">Cytoplasm</location>
    </subcellularLocation>
</comment>
<comment type="domain">
    <text evidence="1">Consists of three domains: the N-terminal catalytic domain, the editing domain and the C-terminal anticodon-binding domain.</text>
</comment>
<comment type="similarity">
    <text evidence="1">Belongs to the class-II aminoacyl-tRNA synthetase family. ProS type 1 subfamily.</text>
</comment>
<keyword id="KW-0030">Aminoacyl-tRNA synthetase</keyword>
<keyword id="KW-0067">ATP-binding</keyword>
<keyword id="KW-0963">Cytoplasm</keyword>
<keyword id="KW-0436">Ligase</keyword>
<keyword id="KW-0547">Nucleotide-binding</keyword>
<keyword id="KW-0648">Protein biosynthesis</keyword>
<keyword id="KW-1185">Reference proteome</keyword>
<proteinExistence type="inferred from homology"/>
<dbReference type="EC" id="6.1.1.15" evidence="1"/>
<dbReference type="EMBL" id="CP000462">
    <property type="protein sequence ID" value="ABK37650.1"/>
    <property type="molecule type" value="Genomic_DNA"/>
</dbReference>
<dbReference type="RefSeq" id="WP_011707374.1">
    <property type="nucleotide sequence ID" value="NC_008570.1"/>
</dbReference>
<dbReference type="RefSeq" id="YP_858106.1">
    <property type="nucleotide sequence ID" value="NC_008570.1"/>
</dbReference>
<dbReference type="SMR" id="A0KPA5"/>
<dbReference type="STRING" id="380703.AHA_3650"/>
<dbReference type="EnsemblBacteria" id="ABK37650">
    <property type="protein sequence ID" value="ABK37650"/>
    <property type="gene ID" value="AHA_3650"/>
</dbReference>
<dbReference type="GeneID" id="4490482"/>
<dbReference type="KEGG" id="aha:AHA_3650"/>
<dbReference type="PATRIC" id="fig|380703.7.peg.3626"/>
<dbReference type="eggNOG" id="COG0442">
    <property type="taxonomic scope" value="Bacteria"/>
</dbReference>
<dbReference type="HOGENOM" id="CLU_016739_0_0_6"/>
<dbReference type="OrthoDB" id="9809052at2"/>
<dbReference type="Proteomes" id="UP000000756">
    <property type="component" value="Chromosome"/>
</dbReference>
<dbReference type="GO" id="GO:0005829">
    <property type="term" value="C:cytosol"/>
    <property type="evidence" value="ECO:0007669"/>
    <property type="project" value="TreeGrafter"/>
</dbReference>
<dbReference type="GO" id="GO:0002161">
    <property type="term" value="F:aminoacyl-tRNA deacylase activity"/>
    <property type="evidence" value="ECO:0007669"/>
    <property type="project" value="InterPro"/>
</dbReference>
<dbReference type="GO" id="GO:0005524">
    <property type="term" value="F:ATP binding"/>
    <property type="evidence" value="ECO:0007669"/>
    <property type="project" value="UniProtKB-UniRule"/>
</dbReference>
<dbReference type="GO" id="GO:0004827">
    <property type="term" value="F:proline-tRNA ligase activity"/>
    <property type="evidence" value="ECO:0007669"/>
    <property type="project" value="UniProtKB-UniRule"/>
</dbReference>
<dbReference type="GO" id="GO:0006433">
    <property type="term" value="P:prolyl-tRNA aminoacylation"/>
    <property type="evidence" value="ECO:0007669"/>
    <property type="project" value="UniProtKB-UniRule"/>
</dbReference>
<dbReference type="CDD" id="cd04334">
    <property type="entry name" value="ProRS-INS"/>
    <property type="match status" value="1"/>
</dbReference>
<dbReference type="CDD" id="cd00861">
    <property type="entry name" value="ProRS_anticodon_short"/>
    <property type="match status" value="1"/>
</dbReference>
<dbReference type="CDD" id="cd00779">
    <property type="entry name" value="ProRS_core_prok"/>
    <property type="match status" value="1"/>
</dbReference>
<dbReference type="FunFam" id="3.30.930.10:FF:000043">
    <property type="entry name" value="Proline--tRNA ligase"/>
    <property type="match status" value="1"/>
</dbReference>
<dbReference type="FunFam" id="3.30.930.10:FF:000097">
    <property type="entry name" value="Proline--tRNA ligase"/>
    <property type="match status" value="1"/>
</dbReference>
<dbReference type="FunFam" id="3.40.50.800:FF:000006">
    <property type="entry name" value="Proline--tRNA ligase"/>
    <property type="match status" value="1"/>
</dbReference>
<dbReference type="Gene3D" id="3.40.50.800">
    <property type="entry name" value="Anticodon-binding domain"/>
    <property type="match status" value="1"/>
</dbReference>
<dbReference type="Gene3D" id="3.30.930.10">
    <property type="entry name" value="Bira Bifunctional Protein, Domain 2"/>
    <property type="match status" value="2"/>
</dbReference>
<dbReference type="Gene3D" id="3.90.960.10">
    <property type="entry name" value="YbaK/aminoacyl-tRNA synthetase-associated domain"/>
    <property type="match status" value="1"/>
</dbReference>
<dbReference type="HAMAP" id="MF_01569">
    <property type="entry name" value="Pro_tRNA_synth_type1"/>
    <property type="match status" value="1"/>
</dbReference>
<dbReference type="InterPro" id="IPR002314">
    <property type="entry name" value="aa-tRNA-synt_IIb"/>
</dbReference>
<dbReference type="InterPro" id="IPR006195">
    <property type="entry name" value="aa-tRNA-synth_II"/>
</dbReference>
<dbReference type="InterPro" id="IPR045864">
    <property type="entry name" value="aa-tRNA-synth_II/BPL/LPL"/>
</dbReference>
<dbReference type="InterPro" id="IPR004154">
    <property type="entry name" value="Anticodon-bd"/>
</dbReference>
<dbReference type="InterPro" id="IPR036621">
    <property type="entry name" value="Anticodon-bd_dom_sf"/>
</dbReference>
<dbReference type="InterPro" id="IPR002316">
    <property type="entry name" value="Pro-tRNA-ligase_IIa"/>
</dbReference>
<dbReference type="InterPro" id="IPR004500">
    <property type="entry name" value="Pro-tRNA-synth_IIa_bac-type"/>
</dbReference>
<dbReference type="InterPro" id="IPR023717">
    <property type="entry name" value="Pro-tRNA-Synthase_IIa_type1"/>
</dbReference>
<dbReference type="InterPro" id="IPR050062">
    <property type="entry name" value="Pro-tRNA_synthetase"/>
</dbReference>
<dbReference type="InterPro" id="IPR044140">
    <property type="entry name" value="ProRS_anticodon_short"/>
</dbReference>
<dbReference type="InterPro" id="IPR033730">
    <property type="entry name" value="ProRS_core_prok"/>
</dbReference>
<dbReference type="InterPro" id="IPR036754">
    <property type="entry name" value="YbaK/aa-tRNA-synt-asso_dom_sf"/>
</dbReference>
<dbReference type="InterPro" id="IPR007214">
    <property type="entry name" value="YbaK/aa-tRNA-synth-assoc-dom"/>
</dbReference>
<dbReference type="NCBIfam" id="NF006625">
    <property type="entry name" value="PRK09194.1"/>
    <property type="match status" value="1"/>
</dbReference>
<dbReference type="NCBIfam" id="TIGR00409">
    <property type="entry name" value="proS_fam_II"/>
    <property type="match status" value="1"/>
</dbReference>
<dbReference type="PANTHER" id="PTHR42753">
    <property type="entry name" value="MITOCHONDRIAL RIBOSOME PROTEIN L39/PROLYL-TRNA LIGASE FAMILY MEMBER"/>
    <property type="match status" value="1"/>
</dbReference>
<dbReference type="PANTHER" id="PTHR42753:SF2">
    <property type="entry name" value="PROLINE--TRNA LIGASE"/>
    <property type="match status" value="1"/>
</dbReference>
<dbReference type="Pfam" id="PF03129">
    <property type="entry name" value="HGTP_anticodon"/>
    <property type="match status" value="1"/>
</dbReference>
<dbReference type="Pfam" id="PF00587">
    <property type="entry name" value="tRNA-synt_2b"/>
    <property type="match status" value="1"/>
</dbReference>
<dbReference type="Pfam" id="PF04073">
    <property type="entry name" value="tRNA_edit"/>
    <property type="match status" value="1"/>
</dbReference>
<dbReference type="PIRSF" id="PIRSF001535">
    <property type="entry name" value="ProRS_1"/>
    <property type="match status" value="1"/>
</dbReference>
<dbReference type="PRINTS" id="PR01046">
    <property type="entry name" value="TRNASYNTHPRO"/>
</dbReference>
<dbReference type="SUPFAM" id="SSF52954">
    <property type="entry name" value="Class II aaRS ABD-related"/>
    <property type="match status" value="1"/>
</dbReference>
<dbReference type="SUPFAM" id="SSF55681">
    <property type="entry name" value="Class II aaRS and biotin synthetases"/>
    <property type="match status" value="1"/>
</dbReference>
<dbReference type="SUPFAM" id="SSF55826">
    <property type="entry name" value="YbaK/ProRS associated domain"/>
    <property type="match status" value="1"/>
</dbReference>
<dbReference type="PROSITE" id="PS50862">
    <property type="entry name" value="AA_TRNA_LIGASE_II"/>
    <property type="match status" value="1"/>
</dbReference>
<gene>
    <name evidence="1" type="primary">proS</name>
    <name type="ordered locus">AHA_3650</name>
</gene>
<feature type="chain" id="PRO_0000288306" description="Proline--tRNA ligase">
    <location>
        <begin position="1"/>
        <end position="574"/>
    </location>
</feature>
<accession>A0KPA5</accession>
<protein>
    <recommendedName>
        <fullName evidence="1">Proline--tRNA ligase</fullName>
        <ecNumber evidence="1">6.1.1.15</ecNumber>
    </recommendedName>
    <alternativeName>
        <fullName evidence="1">Prolyl-tRNA synthetase</fullName>
        <shortName evidence="1">ProRS</shortName>
    </alternativeName>
</protein>
<name>SYP_AERHH</name>
<evidence type="ECO:0000255" key="1">
    <source>
        <dbReference type="HAMAP-Rule" id="MF_01569"/>
    </source>
</evidence>